<reference key="1">
    <citation type="journal article" date="1996" name="DNA Res.">
        <title>Sequence analysis of the genome of the unicellular cyanobacterium Synechocystis sp. strain PCC6803. II. Sequence determination of the entire genome and assignment of potential protein-coding regions.</title>
        <authorList>
            <person name="Kaneko T."/>
            <person name="Sato S."/>
            <person name="Kotani H."/>
            <person name="Tanaka A."/>
            <person name="Asamizu E."/>
            <person name="Nakamura Y."/>
            <person name="Miyajima N."/>
            <person name="Hirosawa M."/>
            <person name="Sugiura M."/>
            <person name="Sasamoto S."/>
            <person name="Kimura T."/>
            <person name="Hosouchi T."/>
            <person name="Matsuno A."/>
            <person name="Muraki A."/>
            <person name="Nakazaki N."/>
            <person name="Naruo K."/>
            <person name="Okumura S."/>
            <person name="Shimpo S."/>
            <person name="Takeuchi C."/>
            <person name="Wada T."/>
            <person name="Watanabe A."/>
            <person name="Yamada M."/>
            <person name="Yasuda M."/>
            <person name="Tabata S."/>
        </authorList>
    </citation>
    <scope>NUCLEOTIDE SEQUENCE [LARGE SCALE GENOMIC DNA]</scope>
    <source>
        <strain>ATCC 27184 / PCC 6803 / Kazusa</strain>
    </source>
</reference>
<comment type="function">
    <text evidence="1">DNA-dependent RNA polymerase catalyzes the transcription of DNA into RNA using the four ribonucleoside triphosphates as substrates.</text>
</comment>
<comment type="catalytic activity">
    <reaction evidence="1">
        <text>RNA(n) + a ribonucleoside 5'-triphosphate = RNA(n+1) + diphosphate</text>
        <dbReference type="Rhea" id="RHEA:21248"/>
        <dbReference type="Rhea" id="RHEA-COMP:14527"/>
        <dbReference type="Rhea" id="RHEA-COMP:17342"/>
        <dbReference type="ChEBI" id="CHEBI:33019"/>
        <dbReference type="ChEBI" id="CHEBI:61557"/>
        <dbReference type="ChEBI" id="CHEBI:140395"/>
        <dbReference type="EC" id="2.7.7.6"/>
    </reaction>
</comment>
<comment type="cofactor">
    <cofactor evidence="1">
        <name>Zn(2+)</name>
        <dbReference type="ChEBI" id="CHEBI:29105"/>
    </cofactor>
    <text evidence="1">Binds 1 Zn(2+) ion per subunit.</text>
</comment>
<comment type="subunit">
    <text evidence="1">In cyanobacteria the RNAP catalytic core is composed of 2 alpha, 1 beta, 1 beta', 1 gamma and 1 omega subunit. When a sigma factor is associated with the core the holoenzyme is formed, which can initiate transcription.</text>
</comment>
<comment type="similarity">
    <text evidence="1">Belongs to the RNA polymerase beta' chain family. RpoC2 subfamily.</text>
</comment>
<organism>
    <name type="scientific">Synechocystis sp. (strain ATCC 27184 / PCC 6803 / Kazusa)</name>
    <dbReference type="NCBI Taxonomy" id="1111708"/>
    <lineage>
        <taxon>Bacteria</taxon>
        <taxon>Bacillati</taxon>
        <taxon>Cyanobacteriota</taxon>
        <taxon>Cyanophyceae</taxon>
        <taxon>Synechococcales</taxon>
        <taxon>Merismopediaceae</taxon>
        <taxon>Synechocystis</taxon>
    </lineage>
</organism>
<proteinExistence type="evidence at protein level"/>
<feature type="chain" id="PRO_0000067910" description="DNA-directed RNA polymerase subunit beta'">
    <location>
        <begin position="1"/>
        <end position="1317"/>
    </location>
</feature>
<feature type="region of interest" description="Disordered" evidence="2">
    <location>
        <begin position="1279"/>
        <end position="1317"/>
    </location>
</feature>
<feature type="compositionally biased region" description="Acidic residues" evidence="2">
    <location>
        <begin position="1288"/>
        <end position="1317"/>
    </location>
</feature>
<feature type="binding site" evidence="1">
    <location>
        <position position="214"/>
    </location>
    <ligand>
        <name>Zn(2+)</name>
        <dbReference type="ChEBI" id="CHEBI:29105"/>
    </ligand>
</feature>
<feature type="binding site" evidence="1">
    <location>
        <position position="286"/>
    </location>
    <ligand>
        <name>Zn(2+)</name>
        <dbReference type="ChEBI" id="CHEBI:29105"/>
    </ligand>
</feature>
<feature type="binding site" evidence="1">
    <location>
        <position position="293"/>
    </location>
    <ligand>
        <name>Zn(2+)</name>
        <dbReference type="ChEBI" id="CHEBI:29105"/>
    </ligand>
</feature>
<feature type="binding site" evidence="1">
    <location>
        <position position="296"/>
    </location>
    <ligand>
        <name>Zn(2+)</name>
        <dbReference type="ChEBI" id="CHEBI:29105"/>
    </ligand>
</feature>
<feature type="strand" evidence="3">
    <location>
        <begin position="3"/>
        <end position="6"/>
    </location>
</feature>
<feature type="helix" evidence="4">
    <location>
        <begin position="10"/>
        <end position="23"/>
    </location>
</feature>
<feature type="helix" evidence="4">
    <location>
        <begin position="27"/>
        <end position="47"/>
    </location>
</feature>
<feature type="helix" evidence="4">
    <location>
        <begin position="62"/>
        <end position="82"/>
    </location>
</feature>
<feature type="helix" evidence="4">
    <location>
        <begin position="87"/>
        <end position="115"/>
    </location>
</feature>
<feature type="helix" evidence="4">
    <location>
        <begin position="121"/>
        <end position="127"/>
    </location>
</feature>
<feature type="helix" evidence="4">
    <location>
        <begin position="134"/>
        <end position="140"/>
    </location>
</feature>
<feature type="strand" evidence="3">
    <location>
        <begin position="150"/>
        <end position="152"/>
    </location>
</feature>
<feature type="turn" evidence="4">
    <location>
        <begin position="163"/>
        <end position="165"/>
    </location>
</feature>
<feature type="helix" evidence="4">
    <location>
        <begin position="169"/>
        <end position="188"/>
    </location>
</feature>
<feature type="helix" evidence="4">
    <location>
        <begin position="190"/>
        <end position="203"/>
    </location>
</feature>
<feature type="turn" evidence="4">
    <location>
        <begin position="204"/>
        <end position="206"/>
    </location>
</feature>
<feature type="strand" evidence="4">
    <location>
        <begin position="208"/>
        <end position="212"/>
    </location>
</feature>
<feature type="strand" evidence="4">
    <location>
        <begin position="220"/>
        <end position="222"/>
    </location>
</feature>
<feature type="strand" evidence="4">
    <location>
        <begin position="225"/>
        <end position="233"/>
    </location>
</feature>
<feature type="helix" evidence="4">
    <location>
        <begin position="235"/>
        <end position="238"/>
    </location>
</feature>
<feature type="strand" evidence="4">
    <location>
        <begin position="243"/>
        <end position="246"/>
    </location>
</feature>
<feature type="strand" evidence="4">
    <location>
        <begin position="251"/>
        <end position="253"/>
    </location>
</feature>
<feature type="strand" evidence="4">
    <location>
        <begin position="255"/>
        <end position="257"/>
    </location>
</feature>
<feature type="helix" evidence="4">
    <location>
        <begin position="265"/>
        <end position="272"/>
    </location>
</feature>
<feature type="strand" evidence="4">
    <location>
        <begin position="278"/>
        <end position="281"/>
    </location>
</feature>
<feature type="helix" evidence="3">
    <location>
        <begin position="283"/>
        <end position="285"/>
    </location>
</feature>
<feature type="strand" evidence="4">
    <location>
        <begin position="288"/>
        <end position="293"/>
    </location>
</feature>
<feature type="helix" evidence="4">
    <location>
        <begin position="294"/>
        <end position="297"/>
    </location>
</feature>
<feature type="turn" evidence="4">
    <location>
        <begin position="301"/>
        <end position="303"/>
    </location>
</feature>
<feature type="strand" evidence="4">
    <location>
        <begin position="304"/>
        <end position="306"/>
    </location>
</feature>
<feature type="helix" evidence="4">
    <location>
        <begin position="313"/>
        <end position="330"/>
    </location>
</feature>
<feature type="helix" evidence="4">
    <location>
        <begin position="332"/>
        <end position="335"/>
    </location>
</feature>
<feature type="strand" evidence="4">
    <location>
        <begin position="350"/>
        <end position="355"/>
    </location>
</feature>
<feature type="strand" evidence="3">
    <location>
        <begin position="359"/>
        <end position="361"/>
    </location>
</feature>
<feature type="strand" evidence="4">
    <location>
        <begin position="363"/>
        <end position="367"/>
    </location>
</feature>
<feature type="strand" evidence="4">
    <location>
        <begin position="369"/>
        <end position="371"/>
    </location>
</feature>
<feature type="strand" evidence="4">
    <location>
        <begin position="373"/>
        <end position="379"/>
    </location>
</feature>
<feature type="strand" evidence="4">
    <location>
        <begin position="382"/>
        <end position="387"/>
    </location>
</feature>
<feature type="strand" evidence="4">
    <location>
        <begin position="394"/>
        <end position="398"/>
    </location>
</feature>
<feature type="strand" evidence="4">
    <location>
        <begin position="403"/>
        <end position="405"/>
    </location>
</feature>
<feature type="strand" evidence="4">
    <location>
        <begin position="420"/>
        <end position="422"/>
    </location>
</feature>
<feature type="turn" evidence="4">
    <location>
        <begin position="427"/>
        <end position="429"/>
    </location>
</feature>
<feature type="strand" evidence="4">
    <location>
        <begin position="431"/>
        <end position="438"/>
    </location>
</feature>
<feature type="strand" evidence="4">
    <location>
        <begin position="444"/>
        <end position="450"/>
    </location>
</feature>
<feature type="strand" evidence="4">
    <location>
        <begin position="453"/>
        <end position="456"/>
    </location>
</feature>
<feature type="strand" evidence="3">
    <location>
        <begin position="459"/>
        <end position="462"/>
    </location>
</feature>
<feature type="strand" evidence="4">
    <location>
        <begin position="464"/>
        <end position="469"/>
    </location>
</feature>
<feature type="strand" evidence="4">
    <location>
        <begin position="472"/>
        <end position="477"/>
    </location>
</feature>
<feature type="strand" evidence="4">
    <location>
        <begin position="479"/>
        <end position="482"/>
    </location>
</feature>
<feature type="strand" evidence="3">
    <location>
        <begin position="487"/>
        <end position="489"/>
    </location>
</feature>
<feature type="strand" evidence="3">
    <location>
        <begin position="504"/>
        <end position="509"/>
    </location>
</feature>
<feature type="strand" evidence="4">
    <location>
        <begin position="519"/>
        <end position="521"/>
    </location>
</feature>
<feature type="strand" evidence="3">
    <location>
        <begin position="525"/>
        <end position="529"/>
    </location>
</feature>
<feature type="strand" evidence="4">
    <location>
        <begin position="543"/>
        <end position="546"/>
    </location>
</feature>
<feature type="strand" evidence="3">
    <location>
        <begin position="550"/>
        <end position="552"/>
    </location>
</feature>
<feature type="strand" evidence="3">
    <location>
        <begin position="558"/>
        <end position="561"/>
    </location>
</feature>
<feature type="strand" evidence="4">
    <location>
        <begin position="571"/>
        <end position="573"/>
    </location>
</feature>
<feature type="strand" evidence="4">
    <location>
        <begin position="576"/>
        <end position="578"/>
    </location>
</feature>
<feature type="strand" evidence="3">
    <location>
        <begin position="581"/>
        <end position="584"/>
    </location>
</feature>
<feature type="strand" evidence="3">
    <location>
        <begin position="589"/>
        <end position="595"/>
    </location>
</feature>
<feature type="turn" evidence="4">
    <location>
        <begin position="603"/>
        <end position="605"/>
    </location>
</feature>
<feature type="strand" evidence="3">
    <location>
        <begin position="607"/>
        <end position="609"/>
    </location>
</feature>
<feature type="strand" evidence="3">
    <location>
        <begin position="614"/>
        <end position="619"/>
    </location>
</feature>
<feature type="strand" evidence="4">
    <location>
        <begin position="621"/>
        <end position="628"/>
    </location>
</feature>
<feature type="helix" evidence="4">
    <location>
        <begin position="629"/>
        <end position="631"/>
    </location>
</feature>
<feature type="turn" evidence="4">
    <location>
        <begin position="642"/>
        <end position="644"/>
    </location>
</feature>
<feature type="strand" evidence="4">
    <location>
        <begin position="646"/>
        <end position="649"/>
    </location>
</feature>
<feature type="strand" evidence="4">
    <location>
        <begin position="657"/>
        <end position="673"/>
    </location>
</feature>
<feature type="helix" evidence="3">
    <location>
        <begin position="683"/>
        <end position="686"/>
    </location>
</feature>
<feature type="strand" evidence="3">
    <location>
        <begin position="690"/>
        <end position="692"/>
    </location>
</feature>
<feature type="strand" evidence="4">
    <location>
        <begin position="710"/>
        <end position="714"/>
    </location>
</feature>
<feature type="strand" evidence="4">
    <location>
        <begin position="723"/>
        <end position="727"/>
    </location>
</feature>
<feature type="strand" evidence="3">
    <location>
        <begin position="759"/>
        <end position="761"/>
    </location>
</feature>
<feature type="strand" evidence="4">
    <location>
        <begin position="780"/>
        <end position="782"/>
    </location>
</feature>
<feature type="strand" evidence="4">
    <location>
        <begin position="800"/>
        <end position="802"/>
    </location>
</feature>
<feature type="strand" evidence="4">
    <location>
        <begin position="807"/>
        <end position="811"/>
    </location>
</feature>
<feature type="strand" evidence="3">
    <location>
        <begin position="814"/>
        <end position="821"/>
    </location>
</feature>
<feature type="turn" evidence="4">
    <location>
        <begin position="832"/>
        <end position="834"/>
    </location>
</feature>
<feature type="strand" evidence="3">
    <location>
        <begin position="840"/>
        <end position="843"/>
    </location>
</feature>
<feature type="strand" evidence="3">
    <location>
        <begin position="854"/>
        <end position="861"/>
    </location>
</feature>
<feature type="strand" evidence="4">
    <location>
        <begin position="866"/>
        <end position="869"/>
    </location>
</feature>
<feature type="strand" evidence="3">
    <location>
        <begin position="873"/>
        <end position="876"/>
    </location>
</feature>
<feature type="strand" evidence="4">
    <location>
        <begin position="880"/>
        <end position="886"/>
    </location>
</feature>
<feature type="strand" evidence="4">
    <location>
        <begin position="889"/>
        <end position="896"/>
    </location>
</feature>
<feature type="strand" evidence="4">
    <location>
        <begin position="910"/>
        <end position="913"/>
    </location>
</feature>
<feature type="strand" evidence="4">
    <location>
        <begin position="922"/>
        <end position="928"/>
    </location>
</feature>
<feature type="strand" evidence="4">
    <location>
        <begin position="934"/>
        <end position="945"/>
    </location>
</feature>
<feature type="strand" evidence="4">
    <location>
        <begin position="951"/>
        <end position="953"/>
    </location>
</feature>
<feature type="strand" evidence="4">
    <location>
        <begin position="956"/>
        <end position="960"/>
    </location>
</feature>
<feature type="strand" evidence="4">
    <location>
        <begin position="967"/>
        <end position="974"/>
    </location>
</feature>
<feature type="helix" evidence="4">
    <location>
        <begin position="979"/>
        <end position="990"/>
    </location>
</feature>
<feature type="strand" evidence="4">
    <location>
        <begin position="1055"/>
        <end position="1057"/>
    </location>
</feature>
<feature type="helix" evidence="4">
    <location>
        <begin position="1061"/>
        <end position="1072"/>
    </location>
</feature>
<feature type="turn" evidence="4">
    <location>
        <begin position="1073"/>
        <end position="1075"/>
    </location>
</feature>
<feature type="helix" evidence="4">
    <location>
        <begin position="1078"/>
        <end position="1102"/>
    </location>
</feature>
<feature type="turn" evidence="4">
    <location>
        <begin position="1103"/>
        <end position="1105"/>
    </location>
</feature>
<feature type="helix" evidence="4">
    <location>
        <begin position="1110"/>
        <end position="1120"/>
    </location>
</feature>
<feature type="strand" evidence="4">
    <location>
        <begin position="1123"/>
        <end position="1128"/>
    </location>
</feature>
<feature type="strand" evidence="4">
    <location>
        <begin position="1131"/>
        <end position="1133"/>
    </location>
</feature>
<feature type="strand" evidence="4">
    <location>
        <begin position="1139"/>
        <end position="1141"/>
    </location>
</feature>
<feature type="helix" evidence="4">
    <location>
        <begin position="1142"/>
        <end position="1153"/>
    </location>
</feature>
<feature type="turn" evidence="4">
    <location>
        <begin position="1154"/>
        <end position="1156"/>
    </location>
</feature>
<feature type="strand" evidence="4">
    <location>
        <begin position="1161"/>
        <end position="1164"/>
    </location>
</feature>
<feature type="helix" evidence="4">
    <location>
        <begin position="1171"/>
        <end position="1174"/>
    </location>
</feature>
<feature type="strand" evidence="3">
    <location>
        <begin position="1175"/>
        <end position="1177"/>
    </location>
</feature>
<feature type="helix" evidence="4">
    <location>
        <begin position="1179"/>
        <end position="1185"/>
    </location>
</feature>
<feature type="helix" evidence="4">
    <location>
        <begin position="1188"/>
        <end position="1198"/>
    </location>
</feature>
<feature type="helix" evidence="4">
    <location>
        <begin position="1207"/>
        <end position="1213"/>
    </location>
</feature>
<feature type="helix" evidence="4">
    <location>
        <begin position="1220"/>
        <end position="1222"/>
    </location>
</feature>
<keyword id="KW-0002">3D-structure</keyword>
<keyword id="KW-0240">DNA-directed RNA polymerase</keyword>
<keyword id="KW-0479">Metal-binding</keyword>
<keyword id="KW-0548">Nucleotidyltransferase</keyword>
<keyword id="KW-1185">Reference proteome</keyword>
<keyword id="KW-0804">Transcription</keyword>
<keyword id="KW-0808">Transferase</keyword>
<keyword id="KW-0862">Zinc</keyword>
<protein>
    <recommendedName>
        <fullName evidence="1">DNA-directed RNA polymerase subunit beta'</fullName>
        <shortName evidence="1">RNAP subunit beta'</shortName>
        <ecNumber evidence="1">2.7.7.6</ecNumber>
    </recommendedName>
    <alternativeName>
        <fullName evidence="1">RNA polymerase subunit beta'</fullName>
    </alternativeName>
    <alternativeName>
        <fullName evidence="1">Transcriptase subunit beta'</fullName>
    </alternativeName>
</protein>
<name>RPOC2_SYNY3</name>
<evidence type="ECO:0000255" key="1">
    <source>
        <dbReference type="HAMAP-Rule" id="MF_01324"/>
    </source>
</evidence>
<evidence type="ECO:0000256" key="2">
    <source>
        <dbReference type="SAM" id="MobiDB-lite"/>
    </source>
</evidence>
<evidence type="ECO:0007829" key="3">
    <source>
        <dbReference type="PDB" id="8GZG"/>
    </source>
</evidence>
<evidence type="ECO:0007829" key="4">
    <source>
        <dbReference type="PDB" id="8GZH"/>
    </source>
</evidence>
<dbReference type="EC" id="2.7.7.6" evidence="1"/>
<dbReference type="EMBL" id="BA000022">
    <property type="protein sequence ID" value="BAA17364.1"/>
    <property type="molecule type" value="Genomic_DNA"/>
</dbReference>
<dbReference type="PIR" id="S77517">
    <property type="entry name" value="S77517"/>
</dbReference>
<dbReference type="PDB" id="8GZG">
    <property type="method" value="EM"/>
    <property type="resolution" value="3.13 A"/>
    <property type="chains" value="Z=1-1317"/>
</dbReference>
<dbReference type="PDB" id="8GZH">
    <property type="method" value="EM"/>
    <property type="resolution" value="2.96 A"/>
    <property type="chains" value="Z=1-1317"/>
</dbReference>
<dbReference type="PDBsum" id="8GZG"/>
<dbReference type="PDBsum" id="8GZH"/>
<dbReference type="EMDB" id="EMD-34397"/>
<dbReference type="EMDB" id="EMD-34398"/>
<dbReference type="SMR" id="P73334"/>
<dbReference type="IntAct" id="P73334">
    <property type="interactions" value="2"/>
</dbReference>
<dbReference type="STRING" id="1148.gene:10498227"/>
<dbReference type="PaxDb" id="1148-1652442"/>
<dbReference type="EnsemblBacteria" id="BAA17364">
    <property type="protein sequence ID" value="BAA17364"/>
    <property type="gene ID" value="BAA17364"/>
</dbReference>
<dbReference type="KEGG" id="syn:sll1789"/>
<dbReference type="eggNOG" id="COG0086">
    <property type="taxonomic scope" value="Bacteria"/>
</dbReference>
<dbReference type="InParanoid" id="P73334"/>
<dbReference type="Proteomes" id="UP000001425">
    <property type="component" value="Chromosome"/>
</dbReference>
<dbReference type="GO" id="GO:0000428">
    <property type="term" value="C:DNA-directed RNA polymerase complex"/>
    <property type="evidence" value="ECO:0007669"/>
    <property type="project" value="UniProtKB-KW"/>
</dbReference>
<dbReference type="GO" id="GO:0003677">
    <property type="term" value="F:DNA binding"/>
    <property type="evidence" value="ECO:0007669"/>
    <property type="project" value="UniProtKB-UniRule"/>
</dbReference>
<dbReference type="GO" id="GO:0003899">
    <property type="term" value="F:DNA-directed RNA polymerase activity"/>
    <property type="evidence" value="ECO:0007669"/>
    <property type="project" value="UniProtKB-UniRule"/>
</dbReference>
<dbReference type="GO" id="GO:0008270">
    <property type="term" value="F:zinc ion binding"/>
    <property type="evidence" value="ECO:0007669"/>
    <property type="project" value="UniProtKB-UniRule"/>
</dbReference>
<dbReference type="GO" id="GO:0006351">
    <property type="term" value="P:DNA-templated transcription"/>
    <property type="evidence" value="ECO:0007669"/>
    <property type="project" value="UniProtKB-UniRule"/>
</dbReference>
<dbReference type="CDD" id="cd02655">
    <property type="entry name" value="RNAP_beta'_C"/>
    <property type="match status" value="1"/>
</dbReference>
<dbReference type="FunFam" id="1.10.150.390:FF:000002">
    <property type="entry name" value="DNA-directed RNA polymerase subunit beta"/>
    <property type="match status" value="1"/>
</dbReference>
<dbReference type="Gene3D" id="1.10.132.30">
    <property type="match status" value="1"/>
</dbReference>
<dbReference type="Gene3D" id="1.10.150.390">
    <property type="match status" value="1"/>
</dbReference>
<dbReference type="Gene3D" id="1.10.1790.20">
    <property type="match status" value="1"/>
</dbReference>
<dbReference type="Gene3D" id="2.40.50.100">
    <property type="match status" value="1"/>
</dbReference>
<dbReference type="Gene3D" id="1.10.274.100">
    <property type="entry name" value="RNA polymerase Rpb1, domain 3"/>
    <property type="match status" value="1"/>
</dbReference>
<dbReference type="HAMAP" id="MF_01324">
    <property type="entry name" value="RNApol_bact_RpoC2"/>
    <property type="match status" value="1"/>
</dbReference>
<dbReference type="InterPro" id="IPR012756">
    <property type="entry name" value="DNA-dir_RpoC2_beta_pp"/>
</dbReference>
<dbReference type="InterPro" id="IPR045867">
    <property type="entry name" value="DNA-dir_RpoC_beta_prime"/>
</dbReference>
<dbReference type="InterPro" id="IPR007066">
    <property type="entry name" value="RNA_pol_Rpb1_3"/>
</dbReference>
<dbReference type="InterPro" id="IPR042102">
    <property type="entry name" value="RNA_pol_Rpb1_3_sf"/>
</dbReference>
<dbReference type="InterPro" id="IPR007083">
    <property type="entry name" value="RNA_pol_Rpb1_4"/>
</dbReference>
<dbReference type="InterPro" id="IPR007081">
    <property type="entry name" value="RNA_pol_Rpb1_5"/>
</dbReference>
<dbReference type="InterPro" id="IPR038120">
    <property type="entry name" value="Rpb1_funnel_sf"/>
</dbReference>
<dbReference type="NCBIfam" id="NF002724">
    <property type="entry name" value="PRK02597.1"/>
    <property type="match status" value="1"/>
</dbReference>
<dbReference type="NCBIfam" id="TIGR02388">
    <property type="entry name" value="rpoC2_cyan"/>
    <property type="match status" value="1"/>
</dbReference>
<dbReference type="PANTHER" id="PTHR19376">
    <property type="entry name" value="DNA-DIRECTED RNA POLYMERASE"/>
    <property type="match status" value="1"/>
</dbReference>
<dbReference type="PANTHER" id="PTHR19376:SF68">
    <property type="entry name" value="DNA-DIRECTED RNA POLYMERASE SUBUNIT BETA"/>
    <property type="match status" value="1"/>
</dbReference>
<dbReference type="Pfam" id="PF04983">
    <property type="entry name" value="RNA_pol_Rpb1_3"/>
    <property type="match status" value="1"/>
</dbReference>
<dbReference type="Pfam" id="PF05000">
    <property type="entry name" value="RNA_pol_Rpb1_4"/>
    <property type="match status" value="1"/>
</dbReference>
<dbReference type="Pfam" id="PF04998">
    <property type="entry name" value="RNA_pol_Rpb1_5"/>
    <property type="match status" value="2"/>
</dbReference>
<dbReference type="SUPFAM" id="SSF64484">
    <property type="entry name" value="beta and beta-prime subunits of DNA dependent RNA-polymerase"/>
    <property type="match status" value="1"/>
</dbReference>
<accession>P73334</accession>
<sequence length="1317" mass="144777">MTFYNYTIDKGRLKKLIALAYRRYGSARCSQLADELKELGFRFATKAGVSISVDDLTIPPEKKQMLEAAEKEIRTTEERYARGEITEVERFQKVIDTWNGTSEELKDQVVVNFRKTDPLNSVYMMAFSGARGNMSQVRQLVGMRGLMADPQGEIIDLPIKTNFREGLTVTEYVISSYGARKGLVDTALRTADSGYLTRRLVDVSQDVIVREQDCGTERSLRVTAMTDGDQVKISLADRLFGRLLAKDVVGPDGEIIAKRNDEIDEALANRIAAVTDEVYVRSPLTCEAARSVCQNCYGWSLAHGHKVDLGEAVGIIAAQSIGEPGTQLTMRTFHTGGVFTGEVARQEKAPEDGTVKWGKGLSTRKVRTRHGEDAEQVEIAGDLIWKGEGKKAATQTYSLTPGSLLFVQDGQTVTAGQLMTEISLSKTQRSTERATKDVAGDLAGEVLFDRLVPEEKTDRQGNTTRIAQRGGLVWILSGEVYNLPPGAEPVVKNDEQVEVGSIMAETKLVTNDGGVVRLVSNREIEIITASVLLDQAQVKLESSGGREQYVIYTADKQRFLLKAAPGTKVQNHSIVAELIDDRYRTTTGGMIRYAGVEVAKGGRKQGYEVTKGGTLLWIPEETHEINKDISLLIVEDGQYVEAGTEVVKDIFCQSSGIVEVVQKNDILREIIIKPGDFYQDVDPGSVKIESGQLLQPGQDVFPGVTVSTLSQAEWIESPEGNGLLLRPVEEYKVFDEPAAPSQGSQNEEGGRQIELRSVQRLFYKDGDRVKSVEGAPLLSTQLVLEIYGSGNEGISHLSADIELQDDEEEDCQRLQLVILESLVLRRDQESDPLGGASKTRLLVQDGDQIPPGAVVARTEIQCKEAGTVRGIKEGQESIRRVLLERAADRLVVDLPSAPEVKPGQLLVAGQELVPGVKLEESGKVLEINGKGDNYQLVLRRARPYRVSPGAVLHIEDGDLVQRGDNLVLLVFERAKTGDIVQGLPRIEELLEARKPKEACVLARAPGVCQVEYLEDESVDIKVVEDDGTVSEYPLLPGQNAMVTDGQRIDVGHALTDGYNNPHEILDVFFSYYVDKDGCYQAALRGLQAAQKFLVNEVQTVYQSQGVDISDKHIEVIVRQMTAKVRIDDGGDTTMLPGELVELRQVEQVNEAMGITGSAPARYTPVLLGITKASLNTDSFISAASFQETTRVLTEAAIEGKSDWLRGLKENVIIGRLIPAGTGFSSHEEVLGLIETQDDIQGYMIEPIELPTTKKKASATKVKTKKVEADDDLLDDTRARAYAGTQLSQDDEEFEETYDTDEDDFDMDDDDDFGDDED</sequence>
<gene>
    <name evidence="1" type="primary">rpoC2</name>
    <name type="ordered locus">sll1789</name>
</gene>